<organism>
    <name type="scientific">Vibrio campbellii (strain ATCC BAA-1116)</name>
    <dbReference type="NCBI Taxonomy" id="2902295"/>
    <lineage>
        <taxon>Bacteria</taxon>
        <taxon>Pseudomonadati</taxon>
        <taxon>Pseudomonadota</taxon>
        <taxon>Gammaproteobacteria</taxon>
        <taxon>Vibrionales</taxon>
        <taxon>Vibrionaceae</taxon>
        <taxon>Vibrio</taxon>
    </lineage>
</organism>
<comment type="similarity">
    <text evidence="1">Belongs to the universal ribosomal protein uL29 family.</text>
</comment>
<feature type="chain" id="PRO_1000007652" description="Large ribosomal subunit protein uL29">
    <location>
        <begin position="1"/>
        <end position="63"/>
    </location>
</feature>
<accession>A7N0I5</accession>
<name>RL29_VIBC1</name>
<reference key="1">
    <citation type="submission" date="2007-08" db="EMBL/GenBank/DDBJ databases">
        <authorList>
            <consortium name="The Vibrio harveyi Genome Sequencing Project"/>
            <person name="Bassler B."/>
            <person name="Clifton S.W."/>
            <person name="Fulton L."/>
            <person name="Delehaunty K."/>
            <person name="Fronick C."/>
            <person name="Harrison M."/>
            <person name="Markivic C."/>
            <person name="Fulton R."/>
            <person name="Tin-Wollam A.-M."/>
            <person name="Shah N."/>
            <person name="Pepin K."/>
            <person name="Nash W."/>
            <person name="Thiruvilangam P."/>
            <person name="Bhonagiri V."/>
            <person name="Waters C."/>
            <person name="Tu K.C."/>
            <person name="Irgon J."/>
            <person name="Wilson R.K."/>
        </authorList>
    </citation>
    <scope>NUCLEOTIDE SEQUENCE [LARGE SCALE GENOMIC DNA]</scope>
    <source>
        <strain>ATCC BAA-1116 / BB120</strain>
    </source>
</reference>
<proteinExistence type="inferred from homology"/>
<keyword id="KW-0687">Ribonucleoprotein</keyword>
<keyword id="KW-0689">Ribosomal protein</keyword>
<protein>
    <recommendedName>
        <fullName evidence="1">Large ribosomal subunit protein uL29</fullName>
    </recommendedName>
    <alternativeName>
        <fullName evidence="2">50S ribosomal protein L29</fullName>
    </alternativeName>
</protein>
<gene>
    <name evidence="1" type="primary">rpmC</name>
    <name type="ordered locus">VIBHAR_00738</name>
</gene>
<evidence type="ECO:0000255" key="1">
    <source>
        <dbReference type="HAMAP-Rule" id="MF_00374"/>
    </source>
</evidence>
<evidence type="ECO:0000305" key="2"/>
<dbReference type="EMBL" id="CP000789">
    <property type="protein sequence ID" value="ABU69739.1"/>
    <property type="molecule type" value="Genomic_DNA"/>
</dbReference>
<dbReference type="RefSeq" id="WP_004410456.1">
    <property type="nucleotide sequence ID" value="NC_022269.1"/>
</dbReference>
<dbReference type="SMR" id="A7N0I5"/>
<dbReference type="GeneID" id="97171189"/>
<dbReference type="KEGG" id="vha:VIBHAR_00738"/>
<dbReference type="PATRIC" id="fig|338187.25.peg.1876"/>
<dbReference type="Proteomes" id="UP000008152">
    <property type="component" value="Chromosome I"/>
</dbReference>
<dbReference type="GO" id="GO:0022625">
    <property type="term" value="C:cytosolic large ribosomal subunit"/>
    <property type="evidence" value="ECO:0007669"/>
    <property type="project" value="TreeGrafter"/>
</dbReference>
<dbReference type="GO" id="GO:0003735">
    <property type="term" value="F:structural constituent of ribosome"/>
    <property type="evidence" value="ECO:0007669"/>
    <property type="project" value="InterPro"/>
</dbReference>
<dbReference type="GO" id="GO:0006412">
    <property type="term" value="P:translation"/>
    <property type="evidence" value="ECO:0007669"/>
    <property type="project" value="UniProtKB-UniRule"/>
</dbReference>
<dbReference type="CDD" id="cd00427">
    <property type="entry name" value="Ribosomal_L29_HIP"/>
    <property type="match status" value="1"/>
</dbReference>
<dbReference type="FunFam" id="1.10.287.310:FF:000001">
    <property type="entry name" value="50S ribosomal protein L29"/>
    <property type="match status" value="1"/>
</dbReference>
<dbReference type="Gene3D" id="1.10.287.310">
    <property type="match status" value="1"/>
</dbReference>
<dbReference type="HAMAP" id="MF_00374">
    <property type="entry name" value="Ribosomal_uL29"/>
    <property type="match status" value="1"/>
</dbReference>
<dbReference type="InterPro" id="IPR050063">
    <property type="entry name" value="Ribosomal_protein_uL29"/>
</dbReference>
<dbReference type="InterPro" id="IPR001854">
    <property type="entry name" value="Ribosomal_uL29"/>
</dbReference>
<dbReference type="InterPro" id="IPR018254">
    <property type="entry name" value="Ribosomal_uL29_CS"/>
</dbReference>
<dbReference type="InterPro" id="IPR036049">
    <property type="entry name" value="Ribosomal_uL29_sf"/>
</dbReference>
<dbReference type="NCBIfam" id="TIGR00012">
    <property type="entry name" value="L29"/>
    <property type="match status" value="1"/>
</dbReference>
<dbReference type="PANTHER" id="PTHR10916">
    <property type="entry name" value="60S RIBOSOMAL PROTEIN L35/50S RIBOSOMAL PROTEIN L29"/>
    <property type="match status" value="1"/>
</dbReference>
<dbReference type="PANTHER" id="PTHR10916:SF0">
    <property type="entry name" value="LARGE RIBOSOMAL SUBUNIT PROTEIN UL29C"/>
    <property type="match status" value="1"/>
</dbReference>
<dbReference type="Pfam" id="PF00831">
    <property type="entry name" value="Ribosomal_L29"/>
    <property type="match status" value="1"/>
</dbReference>
<dbReference type="SUPFAM" id="SSF46561">
    <property type="entry name" value="Ribosomal protein L29 (L29p)"/>
    <property type="match status" value="1"/>
</dbReference>
<dbReference type="PROSITE" id="PS00579">
    <property type="entry name" value="RIBOSOMAL_L29"/>
    <property type="match status" value="1"/>
</dbReference>
<sequence length="63" mass="7175">MKAQDLREKSVEELNAELLNLLREQFNLRMQAATGQLQQTHTLKAVRRDIARVKTVLTEKAGA</sequence>